<protein>
    <recommendedName>
        <fullName>Probable acetyl-CoA acyltransferase</fullName>
        <ecNumber>2.3.1.9</ecNumber>
    </recommendedName>
    <alternativeName>
        <fullName>Acetoacetyl-CoA thiolase</fullName>
    </alternativeName>
</protein>
<comment type="catalytic activity">
    <reaction evidence="2">
        <text>2 acetyl-CoA = acetoacetyl-CoA + CoA</text>
        <dbReference type="Rhea" id="RHEA:21036"/>
        <dbReference type="ChEBI" id="CHEBI:57286"/>
        <dbReference type="ChEBI" id="CHEBI:57287"/>
        <dbReference type="ChEBI" id="CHEBI:57288"/>
        <dbReference type="EC" id="2.3.1.9"/>
    </reaction>
</comment>
<comment type="subcellular location">
    <subcellularLocation>
        <location evidence="1">Cytoplasm</location>
    </subcellularLocation>
</comment>
<comment type="similarity">
    <text evidence="3">Belongs to the thiolase-like superfamily. Thiolase family.</text>
</comment>
<proteinExistence type="inferred from homology"/>
<accession>Q6GJW4</accession>
<reference key="1">
    <citation type="journal article" date="2004" name="Proc. Natl. Acad. Sci. U.S.A.">
        <title>Complete genomes of two clinical Staphylococcus aureus strains: evidence for the rapid evolution of virulence and drug resistance.</title>
        <authorList>
            <person name="Holden M.T.G."/>
            <person name="Feil E.J."/>
            <person name="Lindsay J.A."/>
            <person name="Peacock S.J."/>
            <person name="Day N.P.J."/>
            <person name="Enright M.C."/>
            <person name="Foster T.J."/>
            <person name="Moore C.E."/>
            <person name="Hurst L."/>
            <person name="Atkin R."/>
            <person name="Barron A."/>
            <person name="Bason N."/>
            <person name="Bentley S.D."/>
            <person name="Chillingworth C."/>
            <person name="Chillingworth T."/>
            <person name="Churcher C."/>
            <person name="Clark L."/>
            <person name="Corton C."/>
            <person name="Cronin A."/>
            <person name="Doggett J."/>
            <person name="Dowd L."/>
            <person name="Feltwell T."/>
            <person name="Hance Z."/>
            <person name="Harris B."/>
            <person name="Hauser H."/>
            <person name="Holroyd S."/>
            <person name="Jagels K."/>
            <person name="James K.D."/>
            <person name="Lennard N."/>
            <person name="Line A."/>
            <person name="Mayes R."/>
            <person name="Moule S."/>
            <person name="Mungall K."/>
            <person name="Ormond D."/>
            <person name="Quail M.A."/>
            <person name="Rabbinowitsch E."/>
            <person name="Rutherford K.M."/>
            <person name="Sanders M."/>
            <person name="Sharp S."/>
            <person name="Simmonds M."/>
            <person name="Stevens K."/>
            <person name="Whitehead S."/>
            <person name="Barrell B.G."/>
            <person name="Spratt B.G."/>
            <person name="Parkhill J."/>
        </authorList>
    </citation>
    <scope>NUCLEOTIDE SEQUENCE [LARGE SCALE GENOMIC DNA]</scope>
    <source>
        <strain>MRSA252</strain>
    </source>
</reference>
<sequence length="393" mass="41745">MTRVVLAAAYRTPIGVFGGAFKDVPAYDLGATLIEHIIKETGLNPSEINEVIIGNVLQAGQGQNPARIAAMKGGLPETVPAFTVNKVCGSGLKSIQLAYQSIVTGENDIVLAGGMENMSQSPMLVNNSRFGFKMGHQSMVDSMVYDGLTDVFNQYHMGITAENLVEQYGISREEQDTFAVNSQQKAVRAQQNGEFDSEIVPVSIPQRKGEPIVVTKDEGVRENVSVEKLSRLRPAFKKDGTVTAGNASGINDGAAMMLVMSEDKAKELNIEPLAVLDGFGSHGVDPAIMGIAPVDAVEKALKRSKKELSDIDVFELNEAFAAQSLAVDRELKLPPEKVNVKGGAIALGHPIGASGARVLVTLLHQLNDEVETGLTSLCIGGGQAIAAVVSKYK</sequence>
<dbReference type="EC" id="2.3.1.9"/>
<dbReference type="EMBL" id="BX571856">
    <property type="protein sequence ID" value="CAG39374.1"/>
    <property type="molecule type" value="Genomic_DNA"/>
</dbReference>
<dbReference type="RefSeq" id="WP_000199080.1">
    <property type="nucleotide sequence ID" value="NC_002952.2"/>
</dbReference>
<dbReference type="SMR" id="Q6GJW4"/>
<dbReference type="KEGG" id="sar:SAR0351"/>
<dbReference type="HOGENOM" id="CLU_031026_0_0_9"/>
<dbReference type="Proteomes" id="UP000000596">
    <property type="component" value="Chromosome"/>
</dbReference>
<dbReference type="GO" id="GO:0005737">
    <property type="term" value="C:cytoplasm"/>
    <property type="evidence" value="ECO:0007669"/>
    <property type="project" value="UniProtKB-SubCell"/>
</dbReference>
<dbReference type="GO" id="GO:0003985">
    <property type="term" value="F:acetyl-CoA C-acetyltransferase activity"/>
    <property type="evidence" value="ECO:0007669"/>
    <property type="project" value="UniProtKB-EC"/>
</dbReference>
<dbReference type="CDD" id="cd00751">
    <property type="entry name" value="thiolase"/>
    <property type="match status" value="1"/>
</dbReference>
<dbReference type="FunFam" id="3.40.47.10:FF:000010">
    <property type="entry name" value="Acetyl-CoA acetyltransferase (Thiolase)"/>
    <property type="match status" value="1"/>
</dbReference>
<dbReference type="Gene3D" id="3.40.47.10">
    <property type="match status" value="2"/>
</dbReference>
<dbReference type="InterPro" id="IPR002155">
    <property type="entry name" value="Thiolase"/>
</dbReference>
<dbReference type="InterPro" id="IPR016039">
    <property type="entry name" value="Thiolase-like"/>
</dbReference>
<dbReference type="InterPro" id="IPR020615">
    <property type="entry name" value="Thiolase_acyl_enz_int_AS"/>
</dbReference>
<dbReference type="InterPro" id="IPR020610">
    <property type="entry name" value="Thiolase_AS"/>
</dbReference>
<dbReference type="InterPro" id="IPR020617">
    <property type="entry name" value="Thiolase_C"/>
</dbReference>
<dbReference type="InterPro" id="IPR020613">
    <property type="entry name" value="Thiolase_CS"/>
</dbReference>
<dbReference type="InterPro" id="IPR020616">
    <property type="entry name" value="Thiolase_N"/>
</dbReference>
<dbReference type="NCBIfam" id="TIGR01930">
    <property type="entry name" value="AcCoA-C-Actrans"/>
    <property type="match status" value="1"/>
</dbReference>
<dbReference type="PANTHER" id="PTHR18919:SF107">
    <property type="entry name" value="ACETYL-COA ACETYLTRANSFERASE, CYTOSOLIC"/>
    <property type="match status" value="1"/>
</dbReference>
<dbReference type="PANTHER" id="PTHR18919">
    <property type="entry name" value="ACETYL-COA C-ACYLTRANSFERASE"/>
    <property type="match status" value="1"/>
</dbReference>
<dbReference type="Pfam" id="PF02803">
    <property type="entry name" value="Thiolase_C"/>
    <property type="match status" value="1"/>
</dbReference>
<dbReference type="Pfam" id="PF00108">
    <property type="entry name" value="Thiolase_N"/>
    <property type="match status" value="1"/>
</dbReference>
<dbReference type="PIRSF" id="PIRSF000429">
    <property type="entry name" value="Ac-CoA_Ac_transf"/>
    <property type="match status" value="1"/>
</dbReference>
<dbReference type="SUPFAM" id="SSF53901">
    <property type="entry name" value="Thiolase-like"/>
    <property type="match status" value="2"/>
</dbReference>
<dbReference type="PROSITE" id="PS00098">
    <property type="entry name" value="THIOLASE_1"/>
    <property type="match status" value="1"/>
</dbReference>
<dbReference type="PROSITE" id="PS00737">
    <property type="entry name" value="THIOLASE_2"/>
    <property type="match status" value="1"/>
</dbReference>
<dbReference type="PROSITE" id="PS00099">
    <property type="entry name" value="THIOLASE_3"/>
    <property type="match status" value="1"/>
</dbReference>
<keyword id="KW-0012">Acyltransferase</keyword>
<keyword id="KW-0963">Cytoplasm</keyword>
<keyword id="KW-0808">Transferase</keyword>
<evidence type="ECO:0000250" key="1"/>
<evidence type="ECO:0000255" key="2">
    <source>
        <dbReference type="PROSITE-ProRule" id="PRU10020"/>
    </source>
</evidence>
<evidence type="ECO:0000305" key="3"/>
<name>THLA_STAAR</name>
<gene>
    <name type="ordered locus">SAR0351</name>
</gene>
<organism>
    <name type="scientific">Staphylococcus aureus (strain MRSA252)</name>
    <dbReference type="NCBI Taxonomy" id="282458"/>
    <lineage>
        <taxon>Bacteria</taxon>
        <taxon>Bacillati</taxon>
        <taxon>Bacillota</taxon>
        <taxon>Bacilli</taxon>
        <taxon>Bacillales</taxon>
        <taxon>Staphylococcaceae</taxon>
        <taxon>Staphylococcus</taxon>
    </lineage>
</organism>
<feature type="chain" id="PRO_0000270506" description="Probable acetyl-CoA acyltransferase">
    <location>
        <begin position="1"/>
        <end position="393"/>
    </location>
</feature>
<feature type="active site" description="Acyl-thioester intermediate" evidence="1">
    <location>
        <position position="88"/>
    </location>
</feature>
<feature type="active site" description="Proton acceptor" evidence="2">
    <location>
        <position position="349"/>
    </location>
</feature>
<feature type="active site" description="Proton acceptor" evidence="2">
    <location>
        <position position="378"/>
    </location>
</feature>